<gene>
    <name type="ordered locus">YMR242W-A</name>
</gene>
<evidence type="ECO:0000256" key="1">
    <source>
        <dbReference type="SAM" id="MobiDB-lite"/>
    </source>
</evidence>
<name>YM242_YEAST</name>
<protein>
    <recommendedName>
        <fullName>Uncharacterized protein YMR242W-A</fullName>
    </recommendedName>
</protein>
<proteinExistence type="predicted"/>
<organism>
    <name type="scientific">Saccharomyces cerevisiae (strain ATCC 204508 / S288c)</name>
    <name type="common">Baker's yeast</name>
    <dbReference type="NCBI Taxonomy" id="559292"/>
    <lineage>
        <taxon>Eukaryota</taxon>
        <taxon>Fungi</taxon>
        <taxon>Dikarya</taxon>
        <taxon>Ascomycota</taxon>
        <taxon>Saccharomycotina</taxon>
        <taxon>Saccharomycetes</taxon>
        <taxon>Saccharomycetales</taxon>
        <taxon>Saccharomycetaceae</taxon>
        <taxon>Saccharomyces</taxon>
    </lineage>
</organism>
<reference key="1">
    <citation type="journal article" date="1997" name="Nature">
        <title>The nucleotide sequence of Saccharomyces cerevisiae chromosome XIII.</title>
        <authorList>
            <person name="Bowman S."/>
            <person name="Churcher C.M."/>
            <person name="Badcock K."/>
            <person name="Brown D."/>
            <person name="Chillingworth T."/>
            <person name="Connor R."/>
            <person name="Dedman K."/>
            <person name="Devlin K."/>
            <person name="Gentles S."/>
            <person name="Hamlin N."/>
            <person name="Hunt S."/>
            <person name="Jagels K."/>
            <person name="Lye G."/>
            <person name="Moule S."/>
            <person name="Odell C."/>
            <person name="Pearson D."/>
            <person name="Rajandream M.A."/>
            <person name="Rice P."/>
            <person name="Skelton J."/>
            <person name="Walsh S.V."/>
            <person name="Whitehead S."/>
            <person name="Barrell B.G."/>
        </authorList>
    </citation>
    <scope>NUCLEOTIDE SEQUENCE [LARGE SCALE GENOMIC DNA]</scope>
    <source>
        <strain>ATCC 204508 / S288c</strain>
    </source>
</reference>
<reference key="2">
    <citation type="journal article" date="2014" name="G3 (Bethesda)">
        <title>The reference genome sequence of Saccharomyces cerevisiae: Then and now.</title>
        <authorList>
            <person name="Engel S.R."/>
            <person name="Dietrich F.S."/>
            <person name="Fisk D.G."/>
            <person name="Binkley G."/>
            <person name="Balakrishnan R."/>
            <person name="Costanzo M.C."/>
            <person name="Dwight S.S."/>
            <person name="Hitz B.C."/>
            <person name="Karra K."/>
            <person name="Nash R.S."/>
            <person name="Weng S."/>
            <person name="Wong E.D."/>
            <person name="Lloyd P."/>
            <person name="Skrzypek M.S."/>
            <person name="Miyasato S.R."/>
            <person name="Simison M."/>
            <person name="Cherry J.M."/>
        </authorList>
    </citation>
    <scope>GENOME REANNOTATION</scope>
    <source>
        <strain>ATCC 204508 / S288c</strain>
    </source>
</reference>
<reference key="3">
    <citation type="journal article" date="2002" name="Nat. Biotechnol.">
        <title>An integrated approach for finding overlooked genes in yeast.</title>
        <authorList>
            <person name="Kumar A."/>
            <person name="Harrison P.M."/>
            <person name="Cheung K.-H."/>
            <person name="Lan N."/>
            <person name="Echols N."/>
            <person name="Bertone P."/>
            <person name="Miller P."/>
            <person name="Gerstein M.B."/>
            <person name="Snyder M."/>
        </authorList>
    </citation>
    <scope>NUCLEOTIDE SEQUENCE [GENOMIC DNA]</scope>
</reference>
<keyword id="KW-1185">Reference proteome</keyword>
<sequence length="29" mass="3101">MFKMKFGDTLPRSDFGTGGNKQAPGLELG</sequence>
<dbReference type="EMBL" id="Z48756">
    <property type="status" value="NOT_ANNOTATED_CDS"/>
    <property type="molecule type" value="Genomic_DNA"/>
</dbReference>
<dbReference type="EMBL" id="AF479909">
    <property type="protein sequence ID" value="AAL79222.1"/>
    <property type="molecule type" value="Genomic_DNA"/>
</dbReference>
<dbReference type="EMBL" id="BK006946">
    <property type="protein sequence ID" value="DAA10143.1"/>
    <property type="molecule type" value="Genomic_DNA"/>
</dbReference>
<dbReference type="RefSeq" id="NP_878147.1">
    <property type="nucleotide sequence ID" value="NM_001184616.1"/>
</dbReference>
<dbReference type="BioGRID" id="37047">
    <property type="interactions" value="26"/>
</dbReference>
<dbReference type="FunCoup" id="Q8TGS6">
    <property type="interactions" value="8"/>
</dbReference>
<dbReference type="STRING" id="4932.YMR242W-A"/>
<dbReference type="PaxDb" id="4932-YMR242W-A"/>
<dbReference type="EnsemblFungi" id="YMR242W-A_mRNA">
    <property type="protein sequence ID" value="YMR242W-A"/>
    <property type="gene ID" value="YMR242W-A"/>
</dbReference>
<dbReference type="GeneID" id="1466505"/>
<dbReference type="KEGG" id="sce:YMR242W-A"/>
<dbReference type="AGR" id="SGD:S000028694"/>
<dbReference type="SGD" id="S000028694">
    <property type="gene designation" value="YMR242W-A"/>
</dbReference>
<dbReference type="VEuPathDB" id="FungiDB:YMR242W-A"/>
<dbReference type="HOGENOM" id="CLU_3410762_0_0_1"/>
<dbReference type="InParanoid" id="Q8TGS6"/>
<dbReference type="BioCyc" id="YEAST:G3O-33033-MONOMER"/>
<dbReference type="BioGRID-ORCS" id="1466505">
    <property type="hits" value="0 hits in 10 CRISPR screens"/>
</dbReference>
<dbReference type="PRO" id="PR:Q8TGS6"/>
<dbReference type="Proteomes" id="UP000002311">
    <property type="component" value="Chromosome XIII"/>
</dbReference>
<feature type="chain" id="PRO_0000247792" description="Uncharacterized protein YMR242W-A">
    <location>
        <begin position="1"/>
        <end position="29"/>
    </location>
</feature>
<feature type="region of interest" description="Disordered" evidence="1">
    <location>
        <begin position="1"/>
        <end position="29"/>
    </location>
</feature>
<accession>Q8TGS6</accession>
<accession>D6W069</accession>